<gene>
    <name evidence="1" type="primary">norV</name>
    <name evidence="1" type="synonym">flrD</name>
    <name type="ordered locus">EcolC_1002</name>
</gene>
<name>NORV_ECOLC</name>
<reference key="1">
    <citation type="submission" date="2008-02" db="EMBL/GenBank/DDBJ databases">
        <title>Complete sequence of Escherichia coli C str. ATCC 8739.</title>
        <authorList>
            <person name="Copeland A."/>
            <person name="Lucas S."/>
            <person name="Lapidus A."/>
            <person name="Glavina del Rio T."/>
            <person name="Dalin E."/>
            <person name="Tice H."/>
            <person name="Bruce D."/>
            <person name="Goodwin L."/>
            <person name="Pitluck S."/>
            <person name="Kiss H."/>
            <person name="Brettin T."/>
            <person name="Detter J.C."/>
            <person name="Han C."/>
            <person name="Kuske C.R."/>
            <person name="Schmutz J."/>
            <person name="Larimer F."/>
            <person name="Land M."/>
            <person name="Hauser L."/>
            <person name="Kyrpides N."/>
            <person name="Mikhailova N."/>
            <person name="Ingram L."/>
            <person name="Richardson P."/>
        </authorList>
    </citation>
    <scope>NUCLEOTIDE SEQUENCE [LARGE SCALE GENOMIC DNA]</scope>
    <source>
        <strain>ATCC 8739 / DSM 1576 / NBRC 3972 / NCIMB 8545 / WDCM 00012 / Crooks</strain>
    </source>
</reference>
<proteinExistence type="inferred from homology"/>
<organism>
    <name type="scientific">Escherichia coli (strain ATCC 8739 / DSM 1576 / NBRC 3972 / NCIMB 8545 / WDCM 00012 / Crooks)</name>
    <dbReference type="NCBI Taxonomy" id="481805"/>
    <lineage>
        <taxon>Bacteria</taxon>
        <taxon>Pseudomonadati</taxon>
        <taxon>Pseudomonadota</taxon>
        <taxon>Gammaproteobacteria</taxon>
        <taxon>Enterobacterales</taxon>
        <taxon>Enterobacteriaceae</taxon>
        <taxon>Escherichia</taxon>
    </lineage>
</organism>
<accession>B1IUW9</accession>
<keyword id="KW-0963">Cytoplasm</keyword>
<keyword id="KW-0249">Electron transport</keyword>
<keyword id="KW-0285">Flavoprotein</keyword>
<keyword id="KW-0288">FMN</keyword>
<keyword id="KW-0408">Iron</keyword>
<keyword id="KW-0479">Metal-binding</keyword>
<keyword id="KW-0560">Oxidoreductase</keyword>
<keyword id="KW-0813">Transport</keyword>
<dbReference type="EMBL" id="CP000946">
    <property type="protein sequence ID" value="ACA76671.1"/>
    <property type="molecule type" value="Genomic_DNA"/>
</dbReference>
<dbReference type="RefSeq" id="WP_000029634.1">
    <property type="nucleotide sequence ID" value="NZ_MTFT01000026.1"/>
</dbReference>
<dbReference type="BMRB" id="B1IUW9"/>
<dbReference type="SMR" id="B1IUW9"/>
<dbReference type="KEGG" id="ecl:EcolC_1002"/>
<dbReference type="HOGENOM" id="CLU_017490_0_1_6"/>
<dbReference type="UniPathway" id="UPA00638"/>
<dbReference type="GO" id="GO:0005737">
    <property type="term" value="C:cytoplasm"/>
    <property type="evidence" value="ECO:0007669"/>
    <property type="project" value="UniProtKB-SubCell"/>
</dbReference>
<dbReference type="GO" id="GO:0009055">
    <property type="term" value="F:electron transfer activity"/>
    <property type="evidence" value="ECO:0007669"/>
    <property type="project" value="UniProtKB-UniRule"/>
</dbReference>
<dbReference type="GO" id="GO:0010181">
    <property type="term" value="F:FMN binding"/>
    <property type="evidence" value="ECO:0007669"/>
    <property type="project" value="InterPro"/>
</dbReference>
<dbReference type="GO" id="GO:0005506">
    <property type="term" value="F:iron ion binding"/>
    <property type="evidence" value="ECO:0007669"/>
    <property type="project" value="InterPro"/>
</dbReference>
<dbReference type="GO" id="GO:0016966">
    <property type="term" value="F:nitric oxide reductase activity"/>
    <property type="evidence" value="ECO:0007669"/>
    <property type="project" value="InterPro"/>
</dbReference>
<dbReference type="CDD" id="cd07709">
    <property type="entry name" value="flavodiiron_proteins_MBL-fold"/>
    <property type="match status" value="1"/>
</dbReference>
<dbReference type="CDD" id="cd00730">
    <property type="entry name" value="rubredoxin"/>
    <property type="match status" value="1"/>
</dbReference>
<dbReference type="FunFam" id="2.20.28.10:FF:000010">
    <property type="entry name" value="Anaerobic nitric oxide reductase flavorubredoxin"/>
    <property type="match status" value="1"/>
</dbReference>
<dbReference type="FunFam" id="3.40.50.360:FF:000012">
    <property type="entry name" value="Anaerobic nitric oxide reductase flavorubredoxin"/>
    <property type="match status" value="1"/>
</dbReference>
<dbReference type="FunFam" id="3.60.15.10:FF:000009">
    <property type="entry name" value="Anaerobic nitric oxide reductase flavorubredoxin"/>
    <property type="match status" value="1"/>
</dbReference>
<dbReference type="Gene3D" id="2.20.28.10">
    <property type="match status" value="1"/>
</dbReference>
<dbReference type="Gene3D" id="3.40.50.360">
    <property type="match status" value="1"/>
</dbReference>
<dbReference type="Gene3D" id="3.60.15.10">
    <property type="entry name" value="Ribonuclease Z/Hydroxyacylglutathione hydrolase-like"/>
    <property type="match status" value="1"/>
</dbReference>
<dbReference type="HAMAP" id="MF_01312">
    <property type="entry name" value="NorV"/>
    <property type="match status" value="1"/>
</dbReference>
<dbReference type="InterPro" id="IPR023957">
    <property type="entry name" value="Anaer_NO_rdtase_flvorubredoxin"/>
</dbReference>
<dbReference type="InterPro" id="IPR008254">
    <property type="entry name" value="Flavodoxin/NO_synth"/>
</dbReference>
<dbReference type="InterPro" id="IPR029039">
    <property type="entry name" value="Flavoprotein-like_sf"/>
</dbReference>
<dbReference type="InterPro" id="IPR001279">
    <property type="entry name" value="Metallo-B-lactamas"/>
</dbReference>
<dbReference type="InterPro" id="IPR045761">
    <property type="entry name" value="ODP_dom"/>
</dbReference>
<dbReference type="InterPro" id="IPR036866">
    <property type="entry name" value="RibonucZ/Hydroxyglut_hydro"/>
</dbReference>
<dbReference type="InterPro" id="IPR024934">
    <property type="entry name" value="Rubredoxin-like_dom"/>
</dbReference>
<dbReference type="InterPro" id="IPR016440">
    <property type="entry name" value="Rubredoxin-O_OxRdtase"/>
</dbReference>
<dbReference type="InterPro" id="IPR024935">
    <property type="entry name" value="Rubredoxin_dom"/>
</dbReference>
<dbReference type="NCBIfam" id="NF003954">
    <property type="entry name" value="PRK05452.1"/>
    <property type="match status" value="1"/>
</dbReference>
<dbReference type="PANTHER" id="PTHR43717">
    <property type="entry name" value="ANAEROBIC NITRIC OXIDE REDUCTASE FLAVORUBREDOXIN"/>
    <property type="match status" value="1"/>
</dbReference>
<dbReference type="PANTHER" id="PTHR43717:SF1">
    <property type="entry name" value="ANAEROBIC NITRIC OXIDE REDUCTASE FLAVORUBREDOXIN"/>
    <property type="match status" value="1"/>
</dbReference>
<dbReference type="Pfam" id="PF00258">
    <property type="entry name" value="Flavodoxin_1"/>
    <property type="match status" value="1"/>
</dbReference>
<dbReference type="Pfam" id="PF19583">
    <property type="entry name" value="ODP"/>
    <property type="match status" value="1"/>
</dbReference>
<dbReference type="Pfam" id="PF00301">
    <property type="entry name" value="Rubredoxin"/>
    <property type="match status" value="1"/>
</dbReference>
<dbReference type="PIRSF" id="PIRSF005243">
    <property type="entry name" value="ROO"/>
    <property type="match status" value="1"/>
</dbReference>
<dbReference type="PRINTS" id="PR00163">
    <property type="entry name" value="RUBREDOXIN"/>
</dbReference>
<dbReference type="SMART" id="SM00849">
    <property type="entry name" value="Lactamase_B"/>
    <property type="match status" value="1"/>
</dbReference>
<dbReference type="SUPFAM" id="SSF52218">
    <property type="entry name" value="Flavoproteins"/>
    <property type="match status" value="1"/>
</dbReference>
<dbReference type="SUPFAM" id="SSF56281">
    <property type="entry name" value="Metallo-hydrolase/oxidoreductase"/>
    <property type="match status" value="1"/>
</dbReference>
<dbReference type="SUPFAM" id="SSF57802">
    <property type="entry name" value="Rubredoxin-like"/>
    <property type="match status" value="1"/>
</dbReference>
<dbReference type="PROSITE" id="PS50902">
    <property type="entry name" value="FLAVODOXIN_LIKE"/>
    <property type="match status" value="1"/>
</dbReference>
<dbReference type="PROSITE" id="PS50903">
    <property type="entry name" value="RUBREDOXIN_LIKE"/>
    <property type="match status" value="1"/>
</dbReference>
<protein>
    <recommendedName>
        <fullName evidence="1">Anaerobic nitric oxide reductase flavorubredoxin</fullName>
        <shortName evidence="1">FlRd</shortName>
        <shortName evidence="1">FlavoRb</shortName>
    </recommendedName>
</protein>
<comment type="function">
    <text evidence="1">Anaerobic nitric oxide reductase; uses NADH to detoxify nitric oxide (NO), protecting several 4Fe-4S NO-sensitive enzymes. Has at least 2 reductase partners, only one of which (NorW, flavorubredoxin reductase) has been identified. NO probably binds to the di-iron center; electrons enter from the NorW at rubredoxin and are transferred sequentially to the FMN center and the di-iron center. Also able to function as an aerobic oxygen reductase.</text>
</comment>
<comment type="cofactor">
    <cofactor evidence="1">
        <name>Fe cation</name>
        <dbReference type="ChEBI" id="CHEBI:24875"/>
    </cofactor>
    <text evidence="1">Binds 3 Fe cations per monomer.</text>
</comment>
<comment type="cofactor">
    <cofactor evidence="1">
        <name>FMN</name>
        <dbReference type="ChEBI" id="CHEBI:58210"/>
    </cofactor>
    <text evidence="1">Binds 1 FMN per monomer.</text>
</comment>
<comment type="pathway">
    <text evidence="1">Nitrogen metabolism; nitric oxide reduction.</text>
</comment>
<comment type="subunit">
    <text evidence="1">Homotetramer.</text>
</comment>
<comment type="subcellular location">
    <subcellularLocation>
        <location evidence="1">Cytoplasm</location>
    </subcellularLocation>
</comment>
<comment type="similarity">
    <text evidence="1">In the N-terminal section; belongs to the zinc metallo-hydrolase group 3 family.</text>
</comment>
<sequence>MSIVVKNNIHWVGQRDWEVRDFHGTEYKTLRGSSYNSYLIREEKNVLIDTVDHKFSREFVQNLRNEIDLADIDYIVINHAEEDHAGALTELMAQIPDTPIYCTANAIDSINGHHHHPEWNFNVVKTGDTLDIGNGKQLIFVETPMLHWPDSMMTYLTGDAVLFSNDAFGQHYCDEHLFNDEVDQTELFEQCQRYYANILTPFSRLVTPKITEILGFNLPVDMIATSHGVVWRDNPTQIVELYLKWAADYQEDRITIFYDTMSNNTRMMADAIAQGIAETDPRVAVKIFNVARSDKNEILTNVFRSKGVLVGTSTMNNVMMPKIAGLVEEMTGLRFRNKRASAFGSHGWSGGAVDRLSTRLQDAGFEMSLSLKAKWRPDQDALKLCREHGREIARQWALAPLPQSTVNTVVKEETSATTTADLGPRMQCSVCQWIYDPAKGEPMQDVAPGTPWSEVPDNFLCPECSLGKDVFEELASEAK</sequence>
<feature type="chain" id="PRO_1000086218" description="Anaerobic nitric oxide reductase flavorubredoxin">
    <location>
        <begin position="1"/>
        <end position="479"/>
    </location>
</feature>
<feature type="domain" description="Flavodoxin-like" evidence="1">
    <location>
        <begin position="254"/>
        <end position="393"/>
    </location>
</feature>
<feature type="domain" description="Rubredoxin-like" evidence="1">
    <location>
        <begin position="423"/>
        <end position="474"/>
    </location>
</feature>
<feature type="region of interest" description="Zinc metallo-hydrolase">
    <location>
        <begin position="30"/>
        <end position="210"/>
    </location>
</feature>
<feature type="binding site" evidence="1">
    <location>
        <position position="79"/>
    </location>
    <ligand>
        <name>Fe cation</name>
        <dbReference type="ChEBI" id="CHEBI:24875"/>
        <label>1</label>
    </ligand>
</feature>
<feature type="binding site" evidence="1">
    <location>
        <position position="81"/>
    </location>
    <ligand>
        <name>Fe cation</name>
        <dbReference type="ChEBI" id="CHEBI:24875"/>
        <label>1</label>
    </ligand>
</feature>
<feature type="binding site" evidence="1">
    <location>
        <position position="83"/>
    </location>
    <ligand>
        <name>Fe cation</name>
        <dbReference type="ChEBI" id="CHEBI:24875"/>
        <label>2</label>
    </ligand>
</feature>
<feature type="binding site" evidence="1">
    <location>
        <position position="147"/>
    </location>
    <ligand>
        <name>Fe cation</name>
        <dbReference type="ChEBI" id="CHEBI:24875"/>
        <label>1</label>
    </ligand>
</feature>
<feature type="binding site" evidence="1">
    <location>
        <position position="166"/>
    </location>
    <ligand>
        <name>Fe cation</name>
        <dbReference type="ChEBI" id="CHEBI:24875"/>
        <label>1</label>
    </ligand>
</feature>
<feature type="binding site" evidence="1">
    <location>
        <position position="166"/>
    </location>
    <ligand>
        <name>Fe cation</name>
        <dbReference type="ChEBI" id="CHEBI:24875"/>
        <label>2</label>
    </ligand>
</feature>
<feature type="binding site" evidence="1">
    <location>
        <position position="227"/>
    </location>
    <ligand>
        <name>Fe cation</name>
        <dbReference type="ChEBI" id="CHEBI:24875"/>
        <label>2</label>
    </ligand>
</feature>
<feature type="binding site" evidence="1">
    <location>
        <begin position="260"/>
        <end position="264"/>
    </location>
    <ligand>
        <name>FMN</name>
        <dbReference type="ChEBI" id="CHEBI:58210"/>
    </ligand>
</feature>
<feature type="binding site" evidence="1">
    <location>
        <begin position="342"/>
        <end position="369"/>
    </location>
    <ligand>
        <name>FMN</name>
        <dbReference type="ChEBI" id="CHEBI:58210"/>
    </ligand>
</feature>
<feature type="binding site" evidence="1">
    <location>
        <position position="428"/>
    </location>
    <ligand>
        <name>Fe cation</name>
        <dbReference type="ChEBI" id="CHEBI:24875"/>
        <label>3</label>
    </ligand>
</feature>
<feature type="binding site" evidence="1">
    <location>
        <position position="431"/>
    </location>
    <ligand>
        <name>Fe cation</name>
        <dbReference type="ChEBI" id="CHEBI:24875"/>
        <label>3</label>
    </ligand>
</feature>
<feature type="binding site" evidence="1">
    <location>
        <position position="461"/>
    </location>
    <ligand>
        <name>Fe cation</name>
        <dbReference type="ChEBI" id="CHEBI:24875"/>
        <label>3</label>
    </ligand>
</feature>
<feature type="binding site" evidence="1">
    <location>
        <position position="464"/>
    </location>
    <ligand>
        <name>Fe cation</name>
        <dbReference type="ChEBI" id="CHEBI:24875"/>
        <label>3</label>
    </ligand>
</feature>
<evidence type="ECO:0000255" key="1">
    <source>
        <dbReference type="HAMAP-Rule" id="MF_01312"/>
    </source>
</evidence>